<feature type="chain" id="PRO_0000427879" description="Antitoxin ParD2">
    <location>
        <begin position="1"/>
        <end position="71"/>
    </location>
</feature>
<keyword id="KW-1185">Reference proteome</keyword>
<keyword id="KW-1277">Toxin-antitoxin system</keyword>
<name>PARD2_MYCTO</name>
<proteinExistence type="inferred from homology"/>
<evidence type="ECO:0000250" key="1"/>
<sequence>MVVNRALLASVDALSRDEQIELVEHINGNLAEGMHISEANQALIEARANDTDDAHWSTIDDFDKRIRARLG</sequence>
<accession>P9WJ74</accession>
<accession>F2GKH5</accession>
<accession>P0CW73</accession>
<accession>Q8VJP5</accession>
<dbReference type="EMBL" id="AE000516">
    <property type="protein sequence ID" value="AAK46485.1"/>
    <property type="molecule type" value="Genomic_DNA"/>
</dbReference>
<dbReference type="RefSeq" id="WP_003411127.1">
    <property type="nucleotide sequence ID" value="NZ_KK341227.1"/>
</dbReference>
<dbReference type="SMR" id="P9WJ74"/>
<dbReference type="KEGG" id="mtc:MT2201"/>
<dbReference type="PATRIC" id="fig|83331.31.peg.2374"/>
<dbReference type="HOGENOM" id="CLU_2753490_0_0_11"/>
<dbReference type="Proteomes" id="UP000001020">
    <property type="component" value="Chromosome"/>
</dbReference>
<dbReference type="InterPro" id="IPR013406">
    <property type="entry name" value="CHP02574_addiction_mod"/>
</dbReference>
<dbReference type="NCBIfam" id="TIGR02574">
    <property type="entry name" value="stabl_TIGR02574"/>
    <property type="match status" value="1"/>
</dbReference>
<comment type="function">
    <text evidence="1">Antitoxin component of a type II toxin-antitoxin (TA) system.</text>
</comment>
<reference key="1">
    <citation type="journal article" date="2002" name="J. Bacteriol.">
        <title>Whole-genome comparison of Mycobacterium tuberculosis clinical and laboratory strains.</title>
        <authorList>
            <person name="Fleischmann R.D."/>
            <person name="Alland D."/>
            <person name="Eisen J.A."/>
            <person name="Carpenter L."/>
            <person name="White O."/>
            <person name="Peterson J.D."/>
            <person name="DeBoy R.T."/>
            <person name="Dodson R.J."/>
            <person name="Gwinn M.L."/>
            <person name="Haft D.H."/>
            <person name="Hickey E.K."/>
            <person name="Kolonay J.F."/>
            <person name="Nelson W.C."/>
            <person name="Umayam L.A."/>
            <person name="Ermolaeva M.D."/>
            <person name="Salzberg S.L."/>
            <person name="Delcher A."/>
            <person name="Utterback T.R."/>
            <person name="Weidman J.F."/>
            <person name="Khouri H.M."/>
            <person name="Gill J."/>
            <person name="Mikula A."/>
            <person name="Bishai W."/>
            <person name="Jacobs W.R. Jr."/>
            <person name="Venter J.C."/>
            <person name="Fraser C.M."/>
        </authorList>
    </citation>
    <scope>NUCLEOTIDE SEQUENCE [LARGE SCALE GENOMIC DNA]</scope>
    <source>
        <strain>CDC 1551 / Oshkosh</strain>
    </source>
</reference>
<organism>
    <name type="scientific">Mycobacterium tuberculosis (strain CDC 1551 / Oshkosh)</name>
    <dbReference type="NCBI Taxonomy" id="83331"/>
    <lineage>
        <taxon>Bacteria</taxon>
        <taxon>Bacillati</taxon>
        <taxon>Actinomycetota</taxon>
        <taxon>Actinomycetes</taxon>
        <taxon>Mycobacteriales</taxon>
        <taxon>Mycobacteriaceae</taxon>
        <taxon>Mycobacterium</taxon>
        <taxon>Mycobacterium tuberculosis complex</taxon>
    </lineage>
</organism>
<gene>
    <name type="primary">parD2</name>
    <name type="ordered locus">MT2201</name>
</gene>
<protein>
    <recommendedName>
        <fullName>Antitoxin ParD2</fullName>
    </recommendedName>
</protein>